<sequence>MKRIRIPMTLALGAALTIAPLSFASAEENPAPKMSQTTTAGTTAADVGLNVNLDVLGIANQIADAIKSAQNRDGFVKNLMESSFYASGQKYNVMVFNLSQEYEDHLNGVQFYGSAVYDGITYGIWVFEDGTFTNKGDGGWINWAFRGWFDRDGSTVAFHRP</sequence>
<name>YVGO_BACSU</name>
<gene>
    <name type="primary">yvgO</name>
    <name type="ordered locus">BSU33410</name>
</gene>
<evidence type="ECO:0000255" key="1"/>
<evidence type="ECO:0000269" key="2">
    <source>
    </source>
</evidence>
<comment type="induction">
    <text evidence="2">By phosphate starvation, via the alternative sigma factor sigma-B.</text>
</comment>
<reference key="1">
    <citation type="journal article" date="1997" name="Nature">
        <title>The complete genome sequence of the Gram-positive bacterium Bacillus subtilis.</title>
        <authorList>
            <person name="Kunst F."/>
            <person name="Ogasawara N."/>
            <person name="Moszer I."/>
            <person name="Albertini A.M."/>
            <person name="Alloni G."/>
            <person name="Azevedo V."/>
            <person name="Bertero M.G."/>
            <person name="Bessieres P."/>
            <person name="Bolotin A."/>
            <person name="Borchert S."/>
            <person name="Borriss R."/>
            <person name="Boursier L."/>
            <person name="Brans A."/>
            <person name="Braun M."/>
            <person name="Brignell S.C."/>
            <person name="Bron S."/>
            <person name="Brouillet S."/>
            <person name="Bruschi C.V."/>
            <person name="Caldwell B."/>
            <person name="Capuano V."/>
            <person name="Carter N.M."/>
            <person name="Choi S.-K."/>
            <person name="Codani J.-J."/>
            <person name="Connerton I.F."/>
            <person name="Cummings N.J."/>
            <person name="Daniel R.A."/>
            <person name="Denizot F."/>
            <person name="Devine K.M."/>
            <person name="Duesterhoeft A."/>
            <person name="Ehrlich S.D."/>
            <person name="Emmerson P.T."/>
            <person name="Entian K.-D."/>
            <person name="Errington J."/>
            <person name="Fabret C."/>
            <person name="Ferrari E."/>
            <person name="Foulger D."/>
            <person name="Fritz C."/>
            <person name="Fujita M."/>
            <person name="Fujita Y."/>
            <person name="Fuma S."/>
            <person name="Galizzi A."/>
            <person name="Galleron N."/>
            <person name="Ghim S.-Y."/>
            <person name="Glaser P."/>
            <person name="Goffeau A."/>
            <person name="Golightly E.J."/>
            <person name="Grandi G."/>
            <person name="Guiseppi G."/>
            <person name="Guy B.J."/>
            <person name="Haga K."/>
            <person name="Haiech J."/>
            <person name="Harwood C.R."/>
            <person name="Henaut A."/>
            <person name="Hilbert H."/>
            <person name="Holsappel S."/>
            <person name="Hosono S."/>
            <person name="Hullo M.-F."/>
            <person name="Itaya M."/>
            <person name="Jones L.-M."/>
            <person name="Joris B."/>
            <person name="Karamata D."/>
            <person name="Kasahara Y."/>
            <person name="Klaerr-Blanchard M."/>
            <person name="Klein C."/>
            <person name="Kobayashi Y."/>
            <person name="Koetter P."/>
            <person name="Koningstein G."/>
            <person name="Krogh S."/>
            <person name="Kumano M."/>
            <person name="Kurita K."/>
            <person name="Lapidus A."/>
            <person name="Lardinois S."/>
            <person name="Lauber J."/>
            <person name="Lazarevic V."/>
            <person name="Lee S.-M."/>
            <person name="Levine A."/>
            <person name="Liu H."/>
            <person name="Masuda S."/>
            <person name="Mauel C."/>
            <person name="Medigue C."/>
            <person name="Medina N."/>
            <person name="Mellado R.P."/>
            <person name="Mizuno M."/>
            <person name="Moestl D."/>
            <person name="Nakai S."/>
            <person name="Noback M."/>
            <person name="Noone D."/>
            <person name="O'Reilly M."/>
            <person name="Ogawa K."/>
            <person name="Ogiwara A."/>
            <person name="Oudega B."/>
            <person name="Park S.-H."/>
            <person name="Parro V."/>
            <person name="Pohl T.M."/>
            <person name="Portetelle D."/>
            <person name="Porwollik S."/>
            <person name="Prescott A.M."/>
            <person name="Presecan E."/>
            <person name="Pujic P."/>
            <person name="Purnelle B."/>
            <person name="Rapoport G."/>
            <person name="Rey M."/>
            <person name="Reynolds S."/>
            <person name="Rieger M."/>
            <person name="Rivolta C."/>
            <person name="Rocha E."/>
            <person name="Roche B."/>
            <person name="Rose M."/>
            <person name="Sadaie Y."/>
            <person name="Sato T."/>
            <person name="Scanlan E."/>
            <person name="Schleich S."/>
            <person name="Schroeter R."/>
            <person name="Scoffone F."/>
            <person name="Sekiguchi J."/>
            <person name="Sekowska A."/>
            <person name="Seror S.J."/>
            <person name="Serror P."/>
            <person name="Shin B.-S."/>
            <person name="Soldo B."/>
            <person name="Sorokin A."/>
            <person name="Tacconi E."/>
            <person name="Takagi T."/>
            <person name="Takahashi H."/>
            <person name="Takemaru K."/>
            <person name="Takeuchi M."/>
            <person name="Tamakoshi A."/>
            <person name="Tanaka T."/>
            <person name="Terpstra P."/>
            <person name="Tognoni A."/>
            <person name="Tosato V."/>
            <person name="Uchiyama S."/>
            <person name="Vandenbol M."/>
            <person name="Vannier F."/>
            <person name="Vassarotti A."/>
            <person name="Viari A."/>
            <person name="Wambutt R."/>
            <person name="Wedler E."/>
            <person name="Wedler H."/>
            <person name="Weitzenegger T."/>
            <person name="Winters P."/>
            <person name="Wipat A."/>
            <person name="Yamamoto H."/>
            <person name="Yamane K."/>
            <person name="Yasumoto K."/>
            <person name="Yata K."/>
            <person name="Yoshida K."/>
            <person name="Yoshikawa H.-F."/>
            <person name="Zumstein E."/>
            <person name="Yoshikawa H."/>
            <person name="Danchin A."/>
        </authorList>
    </citation>
    <scope>NUCLEOTIDE SEQUENCE [LARGE SCALE GENOMIC DNA]</scope>
    <source>
        <strain>168</strain>
    </source>
</reference>
<reference key="2">
    <citation type="journal article" date="2002" name="Microbiology">
        <title>Regulatory interactions between the Pho and sigma(B)-dependent general stress regulons of Bacillus subtilis.</title>
        <authorList>
            <person name="Pragai Z."/>
            <person name="Harwood C.R."/>
        </authorList>
    </citation>
    <scope>TRANSCRIPTIONAL REGULATION</scope>
</reference>
<feature type="signal peptide" evidence="1">
    <location>
        <begin position="1"/>
        <end position="26"/>
    </location>
</feature>
<feature type="chain" id="PRO_0000013733" description="Stress response protein YvgO">
    <location>
        <begin position="27"/>
        <end position="161"/>
    </location>
</feature>
<organism>
    <name type="scientific">Bacillus subtilis (strain 168)</name>
    <dbReference type="NCBI Taxonomy" id="224308"/>
    <lineage>
        <taxon>Bacteria</taxon>
        <taxon>Bacillati</taxon>
        <taxon>Bacillota</taxon>
        <taxon>Bacilli</taxon>
        <taxon>Bacillales</taxon>
        <taxon>Bacillaceae</taxon>
        <taxon>Bacillus</taxon>
    </lineage>
</organism>
<dbReference type="EMBL" id="AL009126">
    <property type="protein sequence ID" value="CAB15346.1"/>
    <property type="molecule type" value="Genomic_DNA"/>
</dbReference>
<dbReference type="PIR" id="D70040">
    <property type="entry name" value="D70040"/>
</dbReference>
<dbReference type="RefSeq" id="NP_391221.1">
    <property type="nucleotide sequence ID" value="NC_000964.3"/>
</dbReference>
<dbReference type="RefSeq" id="WP_003243913.1">
    <property type="nucleotide sequence ID" value="NZ_OZ025638.1"/>
</dbReference>
<dbReference type="FunCoup" id="O32211">
    <property type="interactions" value="6"/>
</dbReference>
<dbReference type="STRING" id="224308.BSU33410"/>
<dbReference type="PaxDb" id="224308-BSU33410"/>
<dbReference type="DNASU" id="936024"/>
<dbReference type="EnsemblBacteria" id="CAB15346">
    <property type="protein sequence ID" value="CAB15346"/>
    <property type="gene ID" value="BSU_33410"/>
</dbReference>
<dbReference type="GeneID" id="936024"/>
<dbReference type="KEGG" id="bsu:BSU33410"/>
<dbReference type="PATRIC" id="fig|224308.179.peg.3626"/>
<dbReference type="eggNOG" id="ENOG5033E41">
    <property type="taxonomic scope" value="Bacteria"/>
</dbReference>
<dbReference type="InParanoid" id="O32211"/>
<dbReference type="OrthoDB" id="5195614at2"/>
<dbReference type="BioCyc" id="BSUB:BSU33410-MONOMER"/>
<dbReference type="Proteomes" id="UP000001570">
    <property type="component" value="Chromosome"/>
</dbReference>
<proteinExistence type="evidence at transcript level"/>
<protein>
    <recommendedName>
        <fullName>Stress response protein YvgO</fullName>
    </recommendedName>
</protein>
<accession>O32211</accession>
<keyword id="KW-1185">Reference proteome</keyword>
<keyword id="KW-0732">Signal</keyword>
<keyword id="KW-0346">Stress response</keyword>